<organism>
    <name type="scientific">Arabidopsis thaliana</name>
    <name type="common">Mouse-ear cress</name>
    <dbReference type="NCBI Taxonomy" id="3702"/>
    <lineage>
        <taxon>Eukaryota</taxon>
        <taxon>Viridiplantae</taxon>
        <taxon>Streptophyta</taxon>
        <taxon>Embryophyta</taxon>
        <taxon>Tracheophyta</taxon>
        <taxon>Spermatophyta</taxon>
        <taxon>Magnoliopsida</taxon>
        <taxon>eudicotyledons</taxon>
        <taxon>Gunneridae</taxon>
        <taxon>Pentapetalae</taxon>
        <taxon>rosids</taxon>
        <taxon>malvids</taxon>
        <taxon>Brassicales</taxon>
        <taxon>Brassicaceae</taxon>
        <taxon>Camelineae</taxon>
        <taxon>Arabidopsis</taxon>
    </lineage>
</organism>
<sequence length="691" mass="75461">MSHSRRLSLEPAIDSITGRFRDLQRNDDDVNKPDFRELDLGSPVSTLMPRGSASSSAAATPTSSSGSSGSASGKPSVSSQMAKRLDDAYKSHSGELSSPGSGMPTTTRILKPGHRRSSSTGTPLIFSGSSFTSATSHTSPQGGGSGATSAVSPNTGVLPAGNICPSGRILKTGMASRTSSRTETLCTGTGNYGHGNVVRSGGGGGTSGKAVRVAENGENPEELKRMGNDMYRRGSFSEALSLYDRAILISPGNAAYRSNRAAALTALRRLGEAVKECLEAVRIDPSYSRAHQRLASLYLRLGEAENARRHICFSGQCPDQADLQRLQTLEKHLRRCWEARKIGDWKTAIKETDAAIANGADSSPQLVACKAEAFLRLKQIEDSDFCVSCIPRLDHHYHSQPQVKLFGMVVEAYVLCIQAQVDMALGRFENAVVKAERAAMLDQTNPEVVSVLNNVKMVVRARTRGNELFSSGRFSEACVAYGDGLKQDDSNSVLYCNRAACWYKLGLWEKSVEDCNHALKSQPSYIKALLRRAASYGKLGRWEDAVKDYEFLRRELPGDSEVAESLERAKTVLMNRSQESKSLGFNNEVEAVSTLDKFKKSVALPGVSVFHFKSSSNRQCEEISPFINTLCLRYPLVHFFMVDVEESMALAKAESIRKVPTFKMYKNGDKVKEMVCPSHQFLEDSIKHFLL</sequence>
<accession>Q9SIN1</accession>
<accession>Q9ASR6</accession>
<dbReference type="EMBL" id="AC007087">
    <property type="protein sequence ID" value="AAD22995.2"/>
    <property type="molecule type" value="Genomic_DNA"/>
</dbReference>
<dbReference type="EMBL" id="CP002685">
    <property type="protein sequence ID" value="AEC10141.1"/>
    <property type="molecule type" value="Genomic_DNA"/>
</dbReference>
<dbReference type="EMBL" id="AF367321">
    <property type="protein sequence ID" value="AAK32908.1"/>
    <property type="molecule type" value="mRNA"/>
</dbReference>
<dbReference type="EMBL" id="AY143941">
    <property type="protein sequence ID" value="AAN28880.1"/>
    <property type="molecule type" value="mRNA"/>
</dbReference>
<dbReference type="PIR" id="F84855">
    <property type="entry name" value="F84855"/>
</dbReference>
<dbReference type="RefSeq" id="NP_565976.1">
    <property type="nucleotide sequence ID" value="NM_129819.3"/>
</dbReference>
<dbReference type="SMR" id="Q9SIN1"/>
<dbReference type="BioGRID" id="4195">
    <property type="interactions" value="48"/>
</dbReference>
<dbReference type="FunCoup" id="Q9SIN1">
    <property type="interactions" value="9"/>
</dbReference>
<dbReference type="IntAct" id="Q9SIN1">
    <property type="interactions" value="48"/>
</dbReference>
<dbReference type="STRING" id="3702.Q9SIN1"/>
<dbReference type="GlyGen" id="Q9SIN1">
    <property type="glycosylation" value="1 site"/>
</dbReference>
<dbReference type="iPTMnet" id="Q9SIN1"/>
<dbReference type="PaxDb" id="3702-AT2G42580.1"/>
<dbReference type="ProteomicsDB" id="232367"/>
<dbReference type="EnsemblPlants" id="AT2G42580.1">
    <property type="protein sequence ID" value="AT2G42580.1"/>
    <property type="gene ID" value="AT2G42580"/>
</dbReference>
<dbReference type="GeneID" id="818858"/>
<dbReference type="Gramene" id="AT2G42580.1">
    <property type="protein sequence ID" value="AT2G42580.1"/>
    <property type="gene ID" value="AT2G42580"/>
</dbReference>
<dbReference type="KEGG" id="ath:AT2G42580"/>
<dbReference type="Araport" id="AT2G42580"/>
<dbReference type="TAIR" id="AT2G42580">
    <property type="gene designation" value="TTL3"/>
</dbReference>
<dbReference type="eggNOG" id="KOG0907">
    <property type="taxonomic scope" value="Eukaryota"/>
</dbReference>
<dbReference type="eggNOG" id="KOG1124">
    <property type="taxonomic scope" value="Eukaryota"/>
</dbReference>
<dbReference type="HOGENOM" id="CLU_015299_0_0_1"/>
<dbReference type="InParanoid" id="Q9SIN1"/>
<dbReference type="OMA" id="PFINMLC"/>
<dbReference type="PhylomeDB" id="Q9SIN1"/>
<dbReference type="PRO" id="PR:Q9SIN1"/>
<dbReference type="Proteomes" id="UP000006548">
    <property type="component" value="Chromosome 2"/>
</dbReference>
<dbReference type="ExpressionAtlas" id="Q9SIN1">
    <property type="expression patterns" value="baseline and differential"/>
</dbReference>
<dbReference type="GO" id="GO:0005829">
    <property type="term" value="C:cytosol"/>
    <property type="evidence" value="ECO:0000314"/>
    <property type="project" value="TAIR"/>
</dbReference>
<dbReference type="GO" id="GO:0005886">
    <property type="term" value="C:plasma membrane"/>
    <property type="evidence" value="ECO:0000314"/>
    <property type="project" value="TAIR"/>
</dbReference>
<dbReference type="GO" id="GO:0009734">
    <property type="term" value="P:auxin-activated signaling pathway"/>
    <property type="evidence" value="ECO:0000315"/>
    <property type="project" value="TAIR"/>
</dbReference>
<dbReference type="GO" id="GO:0009742">
    <property type="term" value="P:brassinosteroid mediated signaling pathway"/>
    <property type="evidence" value="ECO:0000315"/>
    <property type="project" value="TAIR"/>
</dbReference>
<dbReference type="GO" id="GO:0010305">
    <property type="term" value="P:leaf vascular tissue pattern formation"/>
    <property type="evidence" value="ECO:0000315"/>
    <property type="project" value="TAIR"/>
</dbReference>
<dbReference type="GO" id="GO:0009733">
    <property type="term" value="P:response to auxin"/>
    <property type="evidence" value="ECO:0000270"/>
    <property type="project" value="UniProtKB"/>
</dbReference>
<dbReference type="GO" id="GO:0006970">
    <property type="term" value="P:response to osmotic stress"/>
    <property type="evidence" value="ECO:0000315"/>
    <property type="project" value="TAIR"/>
</dbReference>
<dbReference type="CDD" id="cd02947">
    <property type="entry name" value="TRX_family"/>
    <property type="match status" value="1"/>
</dbReference>
<dbReference type="FunFam" id="1.25.40.10:FF:000534">
    <property type="entry name" value="TPR repeat-containing thioredoxin TTL4"/>
    <property type="match status" value="1"/>
</dbReference>
<dbReference type="FunFam" id="3.40.30.10:FF:000211">
    <property type="entry name" value="TPR repeat-containing thioredoxin TTL4"/>
    <property type="match status" value="1"/>
</dbReference>
<dbReference type="Gene3D" id="3.40.30.10">
    <property type="entry name" value="Glutaredoxin"/>
    <property type="match status" value="1"/>
</dbReference>
<dbReference type="Gene3D" id="1.25.40.10">
    <property type="entry name" value="Tetratricopeptide repeat domain"/>
    <property type="match status" value="1"/>
</dbReference>
<dbReference type="InterPro" id="IPR036249">
    <property type="entry name" value="Thioredoxin-like_sf"/>
</dbReference>
<dbReference type="InterPro" id="IPR013766">
    <property type="entry name" value="Thioredoxin_domain"/>
</dbReference>
<dbReference type="InterPro" id="IPR011990">
    <property type="entry name" value="TPR-like_helical_dom_sf"/>
</dbReference>
<dbReference type="InterPro" id="IPR019734">
    <property type="entry name" value="TPR_rpt"/>
</dbReference>
<dbReference type="InterPro" id="IPR044534">
    <property type="entry name" value="TTL1-4"/>
</dbReference>
<dbReference type="PANTHER" id="PTHR46050:SF23">
    <property type="entry name" value="INACTIVE TPR REPEAT-CONTAINING THIOREDOXIN TTL3"/>
    <property type="match status" value="1"/>
</dbReference>
<dbReference type="PANTHER" id="PTHR46050">
    <property type="entry name" value="TPR REPEAT-CONTAINING THIOREDOXIN"/>
    <property type="match status" value="1"/>
</dbReference>
<dbReference type="Pfam" id="PF00085">
    <property type="entry name" value="Thioredoxin"/>
    <property type="match status" value="1"/>
</dbReference>
<dbReference type="Pfam" id="PF13432">
    <property type="entry name" value="TPR_16"/>
    <property type="match status" value="1"/>
</dbReference>
<dbReference type="SMART" id="SM00028">
    <property type="entry name" value="TPR"/>
    <property type="match status" value="6"/>
</dbReference>
<dbReference type="SUPFAM" id="SSF52833">
    <property type="entry name" value="Thioredoxin-like"/>
    <property type="match status" value="1"/>
</dbReference>
<dbReference type="SUPFAM" id="SSF48452">
    <property type="entry name" value="TPR-like"/>
    <property type="match status" value="2"/>
</dbReference>
<dbReference type="PROSITE" id="PS50005">
    <property type="entry name" value="TPR"/>
    <property type="match status" value="5"/>
</dbReference>
<dbReference type="PROSITE" id="PS50293">
    <property type="entry name" value="TPR_REGION"/>
    <property type="match status" value="2"/>
</dbReference>
<comment type="function">
    <text evidence="5">Involved in osmotic and salt stress tolerance. May play a role in the control of meristematic cell size during osmotic stress. May function as an adapter protein for BRL2 and may be required for signaling affecting leaf vascular tissue pattern formation.</text>
</comment>
<comment type="subunit">
    <text evidence="5">Interacts with BRL2.</text>
</comment>
<comment type="interaction">
    <interactant intactId="EBI-2292882">
        <id>Q9SIN1</id>
    </interactant>
    <interactant intactId="EBI-2292728">
        <id>Q9ZPS9</id>
        <label>BRL2</label>
    </interactant>
    <organismsDiffer>false</organismsDiffer>
    <experiments>2</experiments>
</comment>
<comment type="interaction">
    <interactant intactId="EBI-2292882">
        <id>Q9SIN1</id>
    </interactant>
    <interactant intactId="EBI-2295096">
        <id>Q8L856</id>
        <label>CYB561A</label>
    </interactant>
    <organismsDiffer>false</organismsDiffer>
    <experiments>2</experiments>
</comment>
<comment type="tissue specificity">
    <text evidence="5 6">Expressed in embryos and organ primordia in shoot and root. In primary and cauline leaves and petals, is expressed in hydathodes, guard cells, petiole cells and cells associated with differentiating vascular bundles.</text>
</comment>
<comment type="induction">
    <text evidence="4 5 6">By salt treatment in cotyledons and cold stress in pollen (PubMed:12805584, PubMed:22232384). Repressed by auxin (e.g. IAA) (PubMed:19000166).</text>
</comment>
<comment type="domain">
    <text evidence="5">The thioredoxin domain is inactive.</text>
</comment>
<comment type="disruption phenotype">
    <text evidence="5 6">Altered vein pattern in cotyledons and primary leaves. Mutant seedlings show increased sensitivity to osmotic and salt stresses in roots.</text>
</comment>
<evidence type="ECO:0000250" key="1">
    <source>
        <dbReference type="UniProtKB" id="Q9MAH1"/>
    </source>
</evidence>
<evidence type="ECO:0000255" key="2"/>
<evidence type="ECO:0000256" key="3">
    <source>
        <dbReference type="SAM" id="MobiDB-lite"/>
    </source>
</evidence>
<evidence type="ECO:0000269" key="4">
    <source>
    </source>
</evidence>
<evidence type="ECO:0000269" key="5">
    <source>
    </source>
</evidence>
<evidence type="ECO:0000269" key="6">
    <source>
    </source>
</evidence>
<evidence type="ECO:0000303" key="7">
    <source>
    </source>
</evidence>
<evidence type="ECO:0000303" key="8">
    <source>
    </source>
</evidence>
<evidence type="ECO:0000312" key="9">
    <source>
        <dbReference type="Araport" id="AT2G42580"/>
    </source>
</evidence>
<evidence type="ECO:0000312" key="10">
    <source>
        <dbReference type="EMBL" id="AAD22995.2"/>
    </source>
</evidence>
<evidence type="ECO:0007744" key="11">
    <source>
    </source>
</evidence>
<keyword id="KW-0597">Phosphoprotein</keyword>
<keyword id="KW-1185">Reference proteome</keyword>
<keyword id="KW-0677">Repeat</keyword>
<keyword id="KW-0346">Stress response</keyword>
<keyword id="KW-0802">TPR repeat</keyword>
<reference key="1">
    <citation type="journal article" date="1999" name="Nature">
        <title>Sequence and analysis of chromosome 2 of the plant Arabidopsis thaliana.</title>
        <authorList>
            <person name="Lin X."/>
            <person name="Kaul S."/>
            <person name="Rounsley S.D."/>
            <person name="Shea T.P."/>
            <person name="Benito M.-I."/>
            <person name="Town C.D."/>
            <person name="Fujii C.Y."/>
            <person name="Mason T.M."/>
            <person name="Bowman C.L."/>
            <person name="Barnstead M.E."/>
            <person name="Feldblyum T.V."/>
            <person name="Buell C.R."/>
            <person name="Ketchum K.A."/>
            <person name="Lee J.J."/>
            <person name="Ronning C.M."/>
            <person name="Koo H.L."/>
            <person name="Moffat K.S."/>
            <person name="Cronin L.A."/>
            <person name="Shen M."/>
            <person name="Pai G."/>
            <person name="Van Aken S."/>
            <person name="Umayam L."/>
            <person name="Tallon L.J."/>
            <person name="Gill J.E."/>
            <person name="Adams M.D."/>
            <person name="Carrera A.J."/>
            <person name="Creasy T.H."/>
            <person name="Goodman H.M."/>
            <person name="Somerville C.R."/>
            <person name="Copenhaver G.P."/>
            <person name="Preuss D."/>
            <person name="Nierman W.C."/>
            <person name="White O."/>
            <person name="Eisen J.A."/>
            <person name="Salzberg S.L."/>
            <person name="Fraser C.M."/>
            <person name="Venter J.C."/>
        </authorList>
    </citation>
    <scope>NUCLEOTIDE SEQUENCE [LARGE SCALE GENOMIC DNA]</scope>
    <source>
        <strain>cv. Columbia</strain>
    </source>
</reference>
<reference key="2">
    <citation type="journal article" date="2017" name="Plant J.">
        <title>Araport11: a complete reannotation of the Arabidopsis thaliana reference genome.</title>
        <authorList>
            <person name="Cheng C.Y."/>
            <person name="Krishnakumar V."/>
            <person name="Chan A.P."/>
            <person name="Thibaud-Nissen F."/>
            <person name="Schobel S."/>
            <person name="Town C.D."/>
        </authorList>
    </citation>
    <scope>GENOME REANNOTATION</scope>
    <source>
        <strain>cv. Columbia</strain>
    </source>
</reference>
<reference key="3">
    <citation type="journal article" date="2003" name="Science">
        <title>Empirical analysis of transcriptional activity in the Arabidopsis genome.</title>
        <authorList>
            <person name="Yamada K."/>
            <person name="Lim J."/>
            <person name="Dale J.M."/>
            <person name="Chen H."/>
            <person name="Shinn P."/>
            <person name="Palm C.J."/>
            <person name="Southwick A.M."/>
            <person name="Wu H.C."/>
            <person name="Kim C.J."/>
            <person name="Nguyen M."/>
            <person name="Pham P.K."/>
            <person name="Cheuk R.F."/>
            <person name="Karlin-Newmann G."/>
            <person name="Liu S.X."/>
            <person name="Lam B."/>
            <person name="Sakano H."/>
            <person name="Wu T."/>
            <person name="Yu G."/>
            <person name="Miranda M."/>
            <person name="Quach H.L."/>
            <person name="Tripp M."/>
            <person name="Chang C.H."/>
            <person name="Lee J.M."/>
            <person name="Toriumi M.J."/>
            <person name="Chan M.M."/>
            <person name="Tang C.C."/>
            <person name="Onodera C.S."/>
            <person name="Deng J.M."/>
            <person name="Akiyama K."/>
            <person name="Ansari Y."/>
            <person name="Arakawa T."/>
            <person name="Banh J."/>
            <person name="Banno F."/>
            <person name="Bowser L."/>
            <person name="Brooks S.Y."/>
            <person name="Carninci P."/>
            <person name="Chao Q."/>
            <person name="Choy N."/>
            <person name="Enju A."/>
            <person name="Goldsmith A.D."/>
            <person name="Gurjal M."/>
            <person name="Hansen N.F."/>
            <person name="Hayashizaki Y."/>
            <person name="Johnson-Hopson C."/>
            <person name="Hsuan V.W."/>
            <person name="Iida K."/>
            <person name="Karnes M."/>
            <person name="Khan S."/>
            <person name="Koesema E."/>
            <person name="Ishida J."/>
            <person name="Jiang P.X."/>
            <person name="Jones T."/>
            <person name="Kawai J."/>
            <person name="Kamiya A."/>
            <person name="Meyers C."/>
            <person name="Nakajima M."/>
            <person name="Narusaka M."/>
            <person name="Seki M."/>
            <person name="Sakurai T."/>
            <person name="Satou M."/>
            <person name="Tamse R."/>
            <person name="Vaysberg M."/>
            <person name="Wallender E.K."/>
            <person name="Wong C."/>
            <person name="Yamamura Y."/>
            <person name="Yuan S."/>
            <person name="Shinozaki K."/>
            <person name="Davis R.W."/>
            <person name="Theologis A."/>
            <person name="Ecker J.R."/>
        </authorList>
    </citation>
    <scope>NUCLEOTIDE SEQUENCE [LARGE SCALE MRNA]</scope>
    <source>
        <strain>cv. Columbia</strain>
    </source>
</reference>
<reference key="4">
    <citation type="journal article" date="2003" name="Plant Physiol.">
        <title>Use of serial analysis of gene expression technology to reveal changes in gene expression in Arabidopsis pollen undergoing cold stress.</title>
        <authorList>
            <person name="Lee J.Y."/>
            <person name="Lee D.H."/>
        </authorList>
    </citation>
    <scope>INDUCTION</scope>
</reference>
<reference key="5">
    <citation type="journal article" date="2006" name="Plant Physiol.">
        <title>The Arabidopsis tetratricopeptide repeat-containing protein TTL1 is required for osmotic stress responses and abscisic acid sensitivity.</title>
        <authorList>
            <person name="Rosado A."/>
            <person name="Schapire A.L."/>
            <person name="Bressan R.A."/>
            <person name="Harfouche A.L."/>
            <person name="Hasegawa P.M."/>
            <person name="Valpuesta V."/>
            <person name="Botella M.A."/>
        </authorList>
    </citation>
    <scope>GENE FAMILY</scope>
</reference>
<reference key="6">
    <citation type="journal article" date="2009" name="J. Proteomics">
        <title>Phosphoproteomic analysis of nuclei-enriched fractions from Arabidopsis thaliana.</title>
        <authorList>
            <person name="Jones A.M.E."/>
            <person name="MacLean D."/>
            <person name="Studholme D.J."/>
            <person name="Serna-Sanz A."/>
            <person name="Andreasson E."/>
            <person name="Rathjen J.P."/>
            <person name="Peck S.C."/>
        </authorList>
    </citation>
    <scope>PHOSPHORYLATION [LARGE SCALE ANALYSIS] AT SER-8 AND SER-42</scope>
    <scope>IDENTIFICATION BY MASS SPECTROMETRY [LARGE SCALE ANALYSIS]</scope>
    <source>
        <strain>cv. Columbia</strain>
    </source>
</reference>
<reference key="7">
    <citation type="journal article" date="2009" name="Plant J.">
        <title>VH1/BRL2 receptor-like kinase interacts with vascular-specific adaptor proteins VIT and VIK to influence leaf venation.</title>
        <authorList>
            <person name="Ceserani T."/>
            <person name="Trofka A."/>
            <person name="Gandotra N."/>
            <person name="Nelson T."/>
        </authorList>
    </citation>
    <scope>FUNCTION</scope>
    <scope>INTERACTION WITH BRL2</scope>
    <scope>TISSUE SPECIFICITY</scope>
    <scope>DISRUPTION PHENOTYPE</scope>
    <scope>INDUCTION BY AUXIN</scope>
</reference>
<reference key="8">
    <citation type="journal article" date="2012" name="Plant Physiol.">
        <title>The Arabidopsis thaliana TETRATRICO PEPTIDE THIOREDOXIN-LIKE gene family is required for osmotic stress tolerance and male sporogenesis.</title>
        <authorList>
            <person name="Lakhssassi N."/>
            <person name="Doblas V.G."/>
            <person name="Rosado A."/>
            <person name="Esteban Del Valle A."/>
            <person name="Pose D."/>
            <person name="Jimenez A.J."/>
            <person name="Castillo A.G."/>
            <person name="Valpuesta V."/>
            <person name="Borsani O."/>
            <person name="Botella M.A."/>
        </authorList>
    </citation>
    <scope>TISSUE SPECIFICITY</scope>
    <scope>INDUCTION</scope>
    <scope>DISRUPTION PHENOTYPE</scope>
</reference>
<protein>
    <recommendedName>
        <fullName evidence="7">Inactive TPR repeat-containing thioredoxin TTL3</fullName>
    </recommendedName>
    <alternativeName>
        <fullName evidence="7">Tetratricopeptide repeat thioredoxin-like 3</fullName>
    </alternativeName>
    <alternativeName>
        <fullName evidence="8">VH1-interacting TPR-containing protein</fullName>
    </alternativeName>
</protein>
<name>TTL3_ARATH</name>
<proteinExistence type="evidence at protein level"/>
<feature type="chain" id="PRO_0000415944" description="Inactive TPR repeat-containing thioredoxin TTL3">
    <location>
        <begin position="1"/>
        <end position="691"/>
    </location>
</feature>
<feature type="repeat" description="TPR 1" evidence="2">
    <location>
        <begin position="220"/>
        <end position="253"/>
    </location>
</feature>
<feature type="repeat" description="TPR 2" evidence="2">
    <location>
        <begin position="255"/>
        <end position="287"/>
    </location>
</feature>
<feature type="repeat" description="TPR 3" evidence="2">
    <location>
        <begin position="289"/>
        <end position="321"/>
    </location>
</feature>
<feature type="repeat" description="TPR 4" evidence="2">
    <location>
        <begin position="327"/>
        <end position="362"/>
    </location>
</feature>
<feature type="repeat" description="TPR 5" evidence="2">
    <location>
        <begin position="412"/>
        <end position="445"/>
    </location>
</feature>
<feature type="repeat" description="TPR 6" evidence="2">
    <location>
        <begin position="458"/>
        <end position="491"/>
    </location>
</feature>
<feature type="repeat" description="TPR 7" evidence="2">
    <location>
        <begin position="492"/>
        <end position="525"/>
    </location>
</feature>
<feature type="repeat" description="TPR 8" evidence="2">
    <location>
        <begin position="527"/>
        <end position="559"/>
    </location>
</feature>
<feature type="domain" description="Thioredoxin" evidence="2">
    <location>
        <begin position="596"/>
        <end position="683"/>
    </location>
</feature>
<feature type="region of interest" description="Disordered" evidence="3">
    <location>
        <begin position="1"/>
        <end position="153"/>
    </location>
</feature>
<feature type="region of interest" description="Disordered" evidence="3">
    <location>
        <begin position="174"/>
        <end position="209"/>
    </location>
</feature>
<feature type="compositionally biased region" description="Basic and acidic residues" evidence="3">
    <location>
        <begin position="19"/>
        <end position="39"/>
    </location>
</feature>
<feature type="compositionally biased region" description="Low complexity" evidence="3">
    <location>
        <begin position="51"/>
        <end position="79"/>
    </location>
</feature>
<feature type="compositionally biased region" description="Basic and acidic residues" evidence="3">
    <location>
        <begin position="83"/>
        <end position="93"/>
    </location>
</feature>
<feature type="compositionally biased region" description="Polar residues" evidence="3">
    <location>
        <begin position="94"/>
        <end position="108"/>
    </location>
</feature>
<feature type="compositionally biased region" description="Polar residues" evidence="3">
    <location>
        <begin position="118"/>
        <end position="140"/>
    </location>
</feature>
<feature type="compositionally biased region" description="Polar residues" evidence="3">
    <location>
        <begin position="175"/>
        <end position="189"/>
    </location>
</feature>
<feature type="modified residue" description="Phosphoserine" evidence="11">
    <location>
        <position position="8"/>
    </location>
</feature>
<feature type="modified residue" description="Phosphoserine" evidence="11">
    <location>
        <position position="42"/>
    </location>
</feature>
<feature type="modified residue" description="Phosphoserine" evidence="1">
    <location>
        <position position="45"/>
    </location>
</feature>
<gene>
    <name evidence="7" type="primary">TTL3</name>
    <name evidence="8" type="synonym">VIT</name>
    <name evidence="9" type="ordered locus">At2g42580</name>
    <name evidence="10" type="ORF">F14N22.15</name>
</gene>